<protein>
    <recommendedName>
        <fullName>Olfactory receptor 4F3/4F16/4F29</fullName>
    </recommendedName>
    <alternativeName>
        <fullName>Olfactory receptor OR1-1</fullName>
    </alternativeName>
</protein>
<proteinExistence type="evidence at protein level"/>
<evidence type="ECO:0000255" key="1"/>
<evidence type="ECO:0000255" key="2">
    <source>
        <dbReference type="PROSITE-ProRule" id="PRU00521"/>
    </source>
</evidence>
<evidence type="ECO:0000305" key="3"/>
<sequence>MDGENHSVVSEFLFLGLTHSWEIQLLLLVFSSVLYVASITGNILIVFSVTTDPHLHSPMYFLLASLSFIDLGACSVTSPKMIYDLFRKRKVISFGGCIAQIFFIHVVGGVEMVLLIAMAFDRYVALCKPLHYLTIMSPRMCLSFLAVAWTLGVSHSLFQLAFLVNLAFCGPNVLDSFYCDLPRLLRLACTDTYRLQFMVTVNSGFICVGTFFILLISYVFILFTVWKHSSGGSSKALSTLSAHSTVVLLFFGPPMFVYTRPHPNSQMDKFLAIFDAVLTPFLNPVVYTFRNKEMKAAIKRVCKQLVIYKRIS</sequence>
<name>OR4F3_HUMAN</name>
<dbReference type="EMBL" id="AL732372">
    <property type="status" value="NOT_ANNOTATED_CDS"/>
    <property type="molecule type" value="Genomic_DNA"/>
</dbReference>
<dbReference type="EMBL" id="BC137547">
    <property type="protein sequence ID" value="AAI37548.1"/>
    <property type="molecule type" value="mRNA"/>
</dbReference>
<dbReference type="EMBL" id="BK004481">
    <property type="protein sequence ID" value="DAA04879.1"/>
    <property type="molecule type" value="Genomic_DNA"/>
</dbReference>
<dbReference type="CCDS" id="CCDS41221.1"/>
<dbReference type="CCDS" id="CCDS43415.1"/>
<dbReference type="CCDS" id="CCDS72675.1"/>
<dbReference type="RefSeq" id="NP_001005221.2">
    <property type="nucleotide sequence ID" value="NM_001005221.2"/>
</dbReference>
<dbReference type="RefSeq" id="NP_001005224.1">
    <property type="nucleotide sequence ID" value="NM_001005224.2"/>
</dbReference>
<dbReference type="RefSeq" id="NP_001005277.1">
    <property type="nucleotide sequence ID" value="NM_001005277.1"/>
</dbReference>
<dbReference type="RefSeq" id="NP_001395315.1">
    <property type="nucleotide sequence ID" value="NM_001408386.1"/>
</dbReference>
<dbReference type="RefSeq" id="XP_016857897.1">
    <property type="nucleotide sequence ID" value="XM_017002408.1"/>
</dbReference>
<dbReference type="RefSeq" id="XP_016857898.1">
    <property type="nucleotide sequence ID" value="XM_017002409.1"/>
</dbReference>
<dbReference type="RefSeq" id="XP_016857899.1">
    <property type="nucleotide sequence ID" value="XM_017002410.1"/>
</dbReference>
<dbReference type="RefSeq" id="XP_016857900.1">
    <property type="nucleotide sequence ID" value="XM_017002411.1"/>
</dbReference>
<dbReference type="RefSeq" id="XP_016864827.1">
    <property type="nucleotide sequence ID" value="XM_017009338.1"/>
</dbReference>
<dbReference type="SMR" id="Q6IEY1"/>
<dbReference type="BioGRID" id="117786">
    <property type="interactions" value="1"/>
</dbReference>
<dbReference type="BioGRID" id="123472">
    <property type="interactions" value="2"/>
</dbReference>
<dbReference type="BioGRID" id="610156">
    <property type="interactions" value="1"/>
</dbReference>
<dbReference type="FunCoup" id="Q6IEY1">
    <property type="interactions" value="417"/>
</dbReference>
<dbReference type="IntAct" id="Q6IEY1">
    <property type="interactions" value="1"/>
</dbReference>
<dbReference type="STRING" id="9606.ENSP00000329982"/>
<dbReference type="GlyCosmos" id="Q6IEY1">
    <property type="glycosylation" value="1 site, No reported glycans"/>
</dbReference>
<dbReference type="GlyGen" id="Q6IEY1">
    <property type="glycosylation" value="1 site"/>
</dbReference>
<dbReference type="iPTMnet" id="Q6IEY1"/>
<dbReference type="PhosphoSitePlus" id="Q6IEY1"/>
<dbReference type="BioMuta" id="OR4F16"/>
<dbReference type="DMDM" id="74762307"/>
<dbReference type="PaxDb" id="9606-ENSP00000329982"/>
<dbReference type="Antibodypedia" id="57198">
    <property type="antibodies" value="62 antibodies from 14 providers"/>
</dbReference>
<dbReference type="Antibodypedia" id="78854">
    <property type="antibodies" value="1 antibodies from 1 providers"/>
</dbReference>
<dbReference type="Antibodypedia" id="78873">
    <property type="antibodies" value="11 antibodies from 3 providers"/>
</dbReference>
<dbReference type="DNASU" id="729759"/>
<dbReference type="Ensembl" id="ENST00000332831.5">
    <property type="protein sequence ID" value="ENSP00000329982.2"/>
    <property type="gene ID" value="ENSG00000284662.2"/>
</dbReference>
<dbReference type="Ensembl" id="ENST00000426406.4">
    <property type="protein sequence ID" value="ENSP00000409316.1"/>
    <property type="gene ID" value="ENSG00000284733.2"/>
</dbReference>
<dbReference type="Ensembl" id="ENST00000456475.1">
    <property type="protein sequence ID" value="ENSP00000394282.1"/>
    <property type="gene ID" value="ENSG00000230178.1"/>
</dbReference>
<dbReference type="GeneID" id="26683"/>
<dbReference type="GeneID" id="729759"/>
<dbReference type="GeneID" id="81399"/>
<dbReference type="KEGG" id="hsa:26683"/>
<dbReference type="KEGG" id="hsa:729759"/>
<dbReference type="KEGG" id="hsa:81399"/>
<dbReference type="MANE-Select" id="ENST00000332831.5">
    <property type="protein sequence ID" value="ENSP00000329982.2"/>
    <property type="RefSeq nucleotide sequence ID" value="NM_001005277.1"/>
    <property type="RefSeq protein sequence ID" value="NP_001005277.1"/>
</dbReference>
<dbReference type="MANE-Select" id="ENST00000426406.4">
    <property type="protein sequence ID" value="ENSP00000409316.1"/>
    <property type="RefSeq nucleotide sequence ID" value="NM_001005221.2"/>
    <property type="RefSeq protein sequence ID" value="NP_001005221.2"/>
</dbReference>
<dbReference type="MANE-Select" id="ENST00000456475.1">
    <property type="protein sequence ID" value="ENSP00000394282.1"/>
    <property type="RefSeq nucleotide sequence ID" value="NM_001408386.1"/>
    <property type="RefSeq protein sequence ID" value="NP_001395315.1"/>
</dbReference>
<dbReference type="UCSC" id="uc010nxu.2">
    <property type="organism name" value="human"/>
</dbReference>
<dbReference type="AGR" id="HGNC:15079"/>
<dbReference type="AGR" id="HGNC:8300"/>
<dbReference type="CTD" id="26683"/>
<dbReference type="CTD" id="729759"/>
<dbReference type="CTD" id="81399"/>
<dbReference type="GeneCards" id="OR4F16"/>
<dbReference type="GeneCards" id="OR4F29"/>
<dbReference type="GeneCards" id="OR4F3"/>
<dbReference type="HGNC" id="HGNC:15079">
    <property type="gene designation" value="OR4F16"/>
</dbReference>
<dbReference type="HGNC" id="HGNC:31275">
    <property type="gene designation" value="OR4F29"/>
</dbReference>
<dbReference type="HGNC" id="HGNC:8300">
    <property type="gene designation" value="OR4F3"/>
</dbReference>
<dbReference type="HPA" id="ENSG00000230178">
    <property type="expression patterns" value="Not detected"/>
</dbReference>
<dbReference type="HPA" id="ENSG00000284662">
    <property type="expression patterns" value="Not detected"/>
</dbReference>
<dbReference type="HPA" id="ENSG00000284733">
    <property type="expression patterns" value="Not detected"/>
</dbReference>
<dbReference type="neXtProt" id="NX_Q6IEY1"/>
<dbReference type="PharmGKB" id="PA32284"/>
<dbReference type="VEuPathDB" id="HostDB:ENSG00000230178"/>
<dbReference type="VEuPathDB" id="HostDB:ENSG00000284662"/>
<dbReference type="VEuPathDB" id="HostDB:ENSG00000284733"/>
<dbReference type="eggNOG" id="ENOG502TEJE">
    <property type="taxonomic scope" value="Eukaryota"/>
</dbReference>
<dbReference type="GeneTree" id="ENSGT00940000162683"/>
<dbReference type="HOGENOM" id="CLU_012526_8_1_1"/>
<dbReference type="InParanoid" id="Q6IEY1"/>
<dbReference type="OMA" id="LGLTYSW"/>
<dbReference type="OrthoDB" id="6147321at2759"/>
<dbReference type="PAN-GO" id="Q6IEY1">
    <property type="GO annotations" value="2 GO annotations based on evolutionary models"/>
</dbReference>
<dbReference type="PhylomeDB" id="Q6IEY1"/>
<dbReference type="TreeFam" id="TF336512"/>
<dbReference type="PathwayCommons" id="Q6IEY1"/>
<dbReference type="Reactome" id="R-HSA-9752946">
    <property type="pathway name" value="Expression and translocation of olfactory receptors"/>
</dbReference>
<dbReference type="BioGRID-ORCS" id="26683">
    <property type="hits" value="12 hits in 171 CRISPR screens"/>
</dbReference>
<dbReference type="BioGRID-ORCS" id="729759">
    <property type="hits" value="11 hits in 171 CRISPR screens"/>
</dbReference>
<dbReference type="BioGRID-ORCS" id="81399">
    <property type="hits" value="59 hits in 599 CRISPR screens"/>
</dbReference>
<dbReference type="GeneWiki" id="OR4F16"/>
<dbReference type="GeneWiki" id="OR4F3"/>
<dbReference type="Pharos" id="Q6IEY1">
    <property type="development level" value="Tdark"/>
</dbReference>
<dbReference type="PRO" id="PR:Q6IEY1"/>
<dbReference type="Proteomes" id="UP000005640">
    <property type="component" value="Chromosome 1"/>
</dbReference>
<dbReference type="Proteomes" id="UP000005640">
    <property type="component" value="Chromosome 5"/>
</dbReference>
<dbReference type="RNAct" id="Q6IEY1">
    <property type="molecule type" value="protein"/>
</dbReference>
<dbReference type="Bgee" id="ENSG00000230178">
    <property type="expression patterns" value="Expressed in right lobe of liver and 21 other cell types or tissues"/>
</dbReference>
<dbReference type="ExpressionAtlas" id="Q6IEY1">
    <property type="expression patterns" value="baseline"/>
</dbReference>
<dbReference type="GO" id="GO:0005886">
    <property type="term" value="C:plasma membrane"/>
    <property type="evidence" value="ECO:0007669"/>
    <property type="project" value="UniProtKB-SubCell"/>
</dbReference>
<dbReference type="GO" id="GO:0004930">
    <property type="term" value="F:G protein-coupled receptor activity"/>
    <property type="evidence" value="ECO:0007669"/>
    <property type="project" value="UniProtKB-KW"/>
</dbReference>
<dbReference type="GO" id="GO:0004984">
    <property type="term" value="F:olfactory receptor activity"/>
    <property type="evidence" value="ECO:0000318"/>
    <property type="project" value="GO_Central"/>
</dbReference>
<dbReference type="CDD" id="cd15226">
    <property type="entry name" value="7tmA_OR4-like"/>
    <property type="match status" value="1"/>
</dbReference>
<dbReference type="FunFam" id="1.10.1220.70:FF:000001">
    <property type="entry name" value="Olfactory receptor"/>
    <property type="match status" value="1"/>
</dbReference>
<dbReference type="FunFam" id="1.20.1070.10:FF:000012">
    <property type="entry name" value="Olfactory receptor"/>
    <property type="match status" value="1"/>
</dbReference>
<dbReference type="Gene3D" id="1.20.1070.10">
    <property type="entry name" value="Rhodopsin 7-helix transmembrane proteins"/>
    <property type="match status" value="1"/>
</dbReference>
<dbReference type="InterPro" id="IPR000276">
    <property type="entry name" value="GPCR_Rhodpsn"/>
</dbReference>
<dbReference type="InterPro" id="IPR017452">
    <property type="entry name" value="GPCR_Rhodpsn_7TM"/>
</dbReference>
<dbReference type="InterPro" id="IPR000725">
    <property type="entry name" value="Olfact_rcpt"/>
</dbReference>
<dbReference type="InterPro" id="IPR050427">
    <property type="entry name" value="Olfactory_Receptors"/>
</dbReference>
<dbReference type="PANTHER" id="PTHR48002">
    <property type="entry name" value="OLFACTORY RECEPTOR"/>
    <property type="match status" value="1"/>
</dbReference>
<dbReference type="Pfam" id="PF13853">
    <property type="entry name" value="7tm_4"/>
    <property type="match status" value="1"/>
</dbReference>
<dbReference type="PRINTS" id="PR00237">
    <property type="entry name" value="GPCRRHODOPSN"/>
</dbReference>
<dbReference type="PRINTS" id="PR00245">
    <property type="entry name" value="OLFACTORYR"/>
</dbReference>
<dbReference type="SUPFAM" id="SSF81321">
    <property type="entry name" value="Family A G protein-coupled receptor-like"/>
    <property type="match status" value="1"/>
</dbReference>
<dbReference type="PROSITE" id="PS00237">
    <property type="entry name" value="G_PROTEIN_RECEP_F1_1"/>
    <property type="match status" value="1"/>
</dbReference>
<dbReference type="PROSITE" id="PS50262">
    <property type="entry name" value="G_PROTEIN_RECEP_F1_2"/>
    <property type="match status" value="1"/>
</dbReference>
<gene>
    <name type="primary">OR4F3</name>
</gene>
<gene>
    <name type="primary">OR4F16</name>
</gene>
<gene>
    <name type="primary">OR4F29</name>
</gene>
<reference key="1">
    <citation type="journal article" date="2006" name="Nature">
        <title>The DNA sequence and biological annotation of human chromosome 1.</title>
        <authorList>
            <person name="Gregory S.G."/>
            <person name="Barlow K.F."/>
            <person name="McLay K.E."/>
            <person name="Kaul R."/>
            <person name="Swarbreck D."/>
            <person name="Dunham A."/>
            <person name="Scott C.E."/>
            <person name="Howe K.L."/>
            <person name="Woodfine K."/>
            <person name="Spencer C.C.A."/>
            <person name="Jones M.C."/>
            <person name="Gillson C."/>
            <person name="Searle S."/>
            <person name="Zhou Y."/>
            <person name="Kokocinski F."/>
            <person name="McDonald L."/>
            <person name="Evans R."/>
            <person name="Phillips K."/>
            <person name="Atkinson A."/>
            <person name="Cooper R."/>
            <person name="Jones C."/>
            <person name="Hall R.E."/>
            <person name="Andrews T.D."/>
            <person name="Lloyd C."/>
            <person name="Ainscough R."/>
            <person name="Almeida J.P."/>
            <person name="Ambrose K.D."/>
            <person name="Anderson F."/>
            <person name="Andrew R.W."/>
            <person name="Ashwell R.I.S."/>
            <person name="Aubin K."/>
            <person name="Babbage A.K."/>
            <person name="Bagguley C.L."/>
            <person name="Bailey J."/>
            <person name="Beasley H."/>
            <person name="Bethel G."/>
            <person name="Bird C.P."/>
            <person name="Bray-Allen S."/>
            <person name="Brown J.Y."/>
            <person name="Brown A.J."/>
            <person name="Buckley D."/>
            <person name="Burton J."/>
            <person name="Bye J."/>
            <person name="Carder C."/>
            <person name="Chapman J.C."/>
            <person name="Clark S.Y."/>
            <person name="Clarke G."/>
            <person name="Clee C."/>
            <person name="Cobley V."/>
            <person name="Collier R.E."/>
            <person name="Corby N."/>
            <person name="Coville G.J."/>
            <person name="Davies J."/>
            <person name="Deadman R."/>
            <person name="Dunn M."/>
            <person name="Earthrowl M."/>
            <person name="Ellington A.G."/>
            <person name="Errington H."/>
            <person name="Frankish A."/>
            <person name="Frankland J."/>
            <person name="French L."/>
            <person name="Garner P."/>
            <person name="Garnett J."/>
            <person name="Gay L."/>
            <person name="Ghori M.R.J."/>
            <person name="Gibson R."/>
            <person name="Gilby L.M."/>
            <person name="Gillett W."/>
            <person name="Glithero R.J."/>
            <person name="Grafham D.V."/>
            <person name="Griffiths C."/>
            <person name="Griffiths-Jones S."/>
            <person name="Grocock R."/>
            <person name="Hammond S."/>
            <person name="Harrison E.S.I."/>
            <person name="Hart E."/>
            <person name="Haugen E."/>
            <person name="Heath P.D."/>
            <person name="Holmes S."/>
            <person name="Holt K."/>
            <person name="Howden P.J."/>
            <person name="Hunt A.R."/>
            <person name="Hunt S.E."/>
            <person name="Hunter G."/>
            <person name="Isherwood J."/>
            <person name="James R."/>
            <person name="Johnson C."/>
            <person name="Johnson D."/>
            <person name="Joy A."/>
            <person name="Kay M."/>
            <person name="Kershaw J.K."/>
            <person name="Kibukawa M."/>
            <person name="Kimberley A.M."/>
            <person name="King A."/>
            <person name="Knights A.J."/>
            <person name="Lad H."/>
            <person name="Laird G."/>
            <person name="Lawlor S."/>
            <person name="Leongamornlert D.A."/>
            <person name="Lloyd D.M."/>
            <person name="Loveland J."/>
            <person name="Lovell J."/>
            <person name="Lush M.J."/>
            <person name="Lyne R."/>
            <person name="Martin S."/>
            <person name="Mashreghi-Mohammadi M."/>
            <person name="Matthews L."/>
            <person name="Matthews N.S.W."/>
            <person name="McLaren S."/>
            <person name="Milne S."/>
            <person name="Mistry S."/>
            <person name="Moore M.J.F."/>
            <person name="Nickerson T."/>
            <person name="O'Dell C.N."/>
            <person name="Oliver K."/>
            <person name="Palmeiri A."/>
            <person name="Palmer S.A."/>
            <person name="Parker A."/>
            <person name="Patel D."/>
            <person name="Pearce A.V."/>
            <person name="Peck A.I."/>
            <person name="Pelan S."/>
            <person name="Phelps K."/>
            <person name="Phillimore B.J."/>
            <person name="Plumb R."/>
            <person name="Rajan J."/>
            <person name="Raymond C."/>
            <person name="Rouse G."/>
            <person name="Saenphimmachak C."/>
            <person name="Sehra H.K."/>
            <person name="Sheridan E."/>
            <person name="Shownkeen R."/>
            <person name="Sims S."/>
            <person name="Skuce C.D."/>
            <person name="Smith M."/>
            <person name="Steward C."/>
            <person name="Subramanian S."/>
            <person name="Sycamore N."/>
            <person name="Tracey A."/>
            <person name="Tromans A."/>
            <person name="Van Helmond Z."/>
            <person name="Wall M."/>
            <person name="Wallis J.M."/>
            <person name="White S."/>
            <person name="Whitehead S.L."/>
            <person name="Wilkinson J.E."/>
            <person name="Willey D.L."/>
            <person name="Williams H."/>
            <person name="Wilming L."/>
            <person name="Wray P.W."/>
            <person name="Wu Z."/>
            <person name="Coulson A."/>
            <person name="Vaudin M."/>
            <person name="Sulston J.E."/>
            <person name="Durbin R.M."/>
            <person name="Hubbard T."/>
            <person name="Wooster R."/>
            <person name="Dunham I."/>
            <person name="Carter N.P."/>
            <person name="McVean G."/>
            <person name="Ross M.T."/>
            <person name="Harrow J."/>
            <person name="Olson M.V."/>
            <person name="Beck S."/>
            <person name="Rogers J."/>
            <person name="Bentley D.R."/>
        </authorList>
    </citation>
    <scope>NUCLEOTIDE SEQUENCE [LARGE SCALE GENOMIC DNA]</scope>
</reference>
<reference key="2">
    <citation type="journal article" date="2004" name="Genome Res.">
        <title>The status, quality, and expansion of the NIH full-length cDNA project: the Mammalian Gene Collection (MGC).</title>
        <authorList>
            <consortium name="The MGC Project Team"/>
        </authorList>
    </citation>
    <scope>NUCLEOTIDE SEQUENCE [LARGE SCALE MRNA]</scope>
</reference>
<reference key="3">
    <citation type="journal article" date="2004" name="Proc. Natl. Acad. Sci. U.S.A.">
        <title>The human olfactory receptor gene family.</title>
        <authorList>
            <person name="Malnic B."/>
            <person name="Godfrey P.A."/>
            <person name="Buck L.B."/>
        </authorList>
    </citation>
    <scope>IDENTIFICATION</scope>
</reference>
<reference key="4">
    <citation type="journal article" date="2004" name="Proc. Natl. Acad. Sci. U.S.A.">
        <authorList>
            <person name="Malnic B."/>
            <person name="Godfrey P.A."/>
            <person name="Buck L.B."/>
        </authorList>
    </citation>
    <scope>ERRATUM OF PUBMED:14983052</scope>
</reference>
<accession>Q6IEY1</accession>
<accession>B2RPQ6</accession>
<organism>
    <name type="scientific">Homo sapiens</name>
    <name type="common">Human</name>
    <dbReference type="NCBI Taxonomy" id="9606"/>
    <lineage>
        <taxon>Eukaryota</taxon>
        <taxon>Metazoa</taxon>
        <taxon>Chordata</taxon>
        <taxon>Craniata</taxon>
        <taxon>Vertebrata</taxon>
        <taxon>Euteleostomi</taxon>
        <taxon>Mammalia</taxon>
        <taxon>Eutheria</taxon>
        <taxon>Euarchontoglires</taxon>
        <taxon>Primates</taxon>
        <taxon>Haplorrhini</taxon>
        <taxon>Catarrhini</taxon>
        <taxon>Hominidae</taxon>
        <taxon>Homo</taxon>
    </lineage>
</organism>
<comment type="function">
    <text evidence="3">Odorant receptor.</text>
</comment>
<comment type="interaction">
    <interactant intactId="EBI-18294332">
        <id>Q6IEY1</id>
    </interactant>
    <interactant intactId="EBI-17208936">
        <id>P0CB47</id>
        <label>UBTFL1</label>
    </interactant>
    <organismsDiffer>false</organismsDiffer>
    <experiments>3</experiments>
</comment>
<comment type="subcellular location">
    <subcellularLocation>
        <location>Cell membrane</location>
        <topology>Multi-pass membrane protein</topology>
    </subcellularLocation>
</comment>
<comment type="similarity">
    <text evidence="2">Belongs to the G-protein coupled receptor 1 family.</text>
</comment>
<comment type="online information" name="Human Olfactory Receptor Data Exploratorium (HORDE)">
    <link uri="http://genome.weizmann.ac.il/horde/card/index/symbol:OR4F29"/>
</comment>
<comment type="online information" name="Human Olfactory Receptor Data Exploratorium (HORDE)">
    <link uri="http://genome.weizmann.ac.il/horde/card/index/symbol:OR4F3"/>
</comment>
<comment type="online information" name="Human Olfactory Receptor Data Exploratorium (HORDE)">
    <link uri="http://genome.weizmann.ac.il/horde/card/index/symbol:OR4F16"/>
</comment>
<keyword id="KW-1003">Cell membrane</keyword>
<keyword id="KW-1015">Disulfide bond</keyword>
<keyword id="KW-0297">G-protein coupled receptor</keyword>
<keyword id="KW-0325">Glycoprotein</keyword>
<keyword id="KW-0472">Membrane</keyword>
<keyword id="KW-0552">Olfaction</keyword>
<keyword id="KW-0675">Receptor</keyword>
<keyword id="KW-1185">Reference proteome</keyword>
<keyword id="KW-0716">Sensory transduction</keyword>
<keyword id="KW-0807">Transducer</keyword>
<keyword id="KW-0812">Transmembrane</keyword>
<keyword id="KW-1133">Transmembrane helix</keyword>
<feature type="chain" id="PRO_0000150551" description="Olfactory receptor 4F3/4F16/4F29">
    <location>
        <begin position="1"/>
        <end position="312"/>
    </location>
</feature>
<feature type="topological domain" description="Extracellular" evidence="1">
    <location>
        <begin position="1"/>
        <end position="25"/>
    </location>
</feature>
<feature type="transmembrane region" description="Helical; Name=1" evidence="1">
    <location>
        <begin position="26"/>
        <end position="49"/>
    </location>
</feature>
<feature type="topological domain" description="Cytoplasmic" evidence="1">
    <location>
        <begin position="50"/>
        <end position="57"/>
    </location>
</feature>
<feature type="transmembrane region" description="Helical; Name=2" evidence="1">
    <location>
        <begin position="58"/>
        <end position="79"/>
    </location>
</feature>
<feature type="topological domain" description="Extracellular" evidence="1">
    <location>
        <begin position="80"/>
        <end position="100"/>
    </location>
</feature>
<feature type="transmembrane region" description="Helical; Name=3" evidence="1">
    <location>
        <begin position="101"/>
        <end position="120"/>
    </location>
</feature>
<feature type="topological domain" description="Cytoplasmic" evidence="1">
    <location>
        <begin position="121"/>
        <end position="139"/>
    </location>
</feature>
<feature type="transmembrane region" description="Helical; Name=4" evidence="1">
    <location>
        <begin position="140"/>
        <end position="158"/>
    </location>
</feature>
<feature type="topological domain" description="Extracellular" evidence="1">
    <location>
        <begin position="159"/>
        <end position="195"/>
    </location>
</feature>
<feature type="transmembrane region" description="Helical; Name=5" evidence="1">
    <location>
        <begin position="196"/>
        <end position="219"/>
    </location>
</feature>
<feature type="topological domain" description="Cytoplasmic" evidence="1">
    <location>
        <begin position="220"/>
        <end position="235"/>
    </location>
</feature>
<feature type="transmembrane region" description="Helical; Name=6" evidence="1">
    <location>
        <begin position="236"/>
        <end position="258"/>
    </location>
</feature>
<feature type="topological domain" description="Extracellular" evidence="1">
    <location>
        <begin position="259"/>
        <end position="269"/>
    </location>
</feature>
<feature type="transmembrane region" description="Helical; Name=7" evidence="1">
    <location>
        <begin position="270"/>
        <end position="289"/>
    </location>
</feature>
<feature type="topological domain" description="Cytoplasmic" evidence="1">
    <location>
        <begin position="290"/>
        <end position="312"/>
    </location>
</feature>
<feature type="glycosylation site" description="N-linked (GlcNAc...) asparagine" evidence="1">
    <location>
        <position position="5"/>
    </location>
</feature>
<feature type="disulfide bond" evidence="2">
    <location>
        <begin position="97"/>
        <end position="189"/>
    </location>
</feature>